<accession>A3DJH6</accession>
<feature type="chain" id="PRO_1000051041" description="Small ribosomal subunit protein uS19">
    <location>
        <begin position="1"/>
        <end position="94"/>
    </location>
</feature>
<proteinExistence type="inferred from homology"/>
<comment type="function">
    <text evidence="1">Protein S19 forms a complex with S13 that binds strongly to the 16S ribosomal RNA.</text>
</comment>
<comment type="similarity">
    <text evidence="1">Belongs to the universal ribosomal protein uS19 family.</text>
</comment>
<name>RS19_ACET2</name>
<keyword id="KW-1185">Reference proteome</keyword>
<keyword id="KW-0687">Ribonucleoprotein</keyword>
<keyword id="KW-0689">Ribosomal protein</keyword>
<keyword id="KW-0694">RNA-binding</keyword>
<keyword id="KW-0699">rRNA-binding</keyword>
<evidence type="ECO:0000255" key="1">
    <source>
        <dbReference type="HAMAP-Rule" id="MF_00531"/>
    </source>
</evidence>
<evidence type="ECO:0000305" key="2"/>
<reference key="1">
    <citation type="submission" date="2007-02" db="EMBL/GenBank/DDBJ databases">
        <title>Complete sequence of Clostridium thermocellum ATCC 27405.</title>
        <authorList>
            <consortium name="US DOE Joint Genome Institute"/>
            <person name="Copeland A."/>
            <person name="Lucas S."/>
            <person name="Lapidus A."/>
            <person name="Barry K."/>
            <person name="Detter J.C."/>
            <person name="Glavina del Rio T."/>
            <person name="Hammon N."/>
            <person name="Israni S."/>
            <person name="Dalin E."/>
            <person name="Tice H."/>
            <person name="Pitluck S."/>
            <person name="Chertkov O."/>
            <person name="Brettin T."/>
            <person name="Bruce D."/>
            <person name="Han C."/>
            <person name="Tapia R."/>
            <person name="Gilna P."/>
            <person name="Schmutz J."/>
            <person name="Larimer F."/>
            <person name="Land M."/>
            <person name="Hauser L."/>
            <person name="Kyrpides N."/>
            <person name="Mikhailova N."/>
            <person name="Wu J.H.D."/>
            <person name="Newcomb M."/>
            <person name="Richardson P."/>
        </authorList>
    </citation>
    <scope>NUCLEOTIDE SEQUENCE [LARGE SCALE GENOMIC DNA]</scope>
    <source>
        <strain>ATCC 27405 / DSM 1237 / JCM 9322 / NBRC 103400 / NCIMB 10682 / NRRL B-4536 / VPI 7372</strain>
    </source>
</reference>
<sequence length="94" mass="10596">MSRSVKKGPYVDPKLLKKIEEMNAKNEKKVIKTWSRASTIFPQMVGHTIAVHDGRKHVPIYISEEMVGHKLGEFAPTRTFKGHGAHTEKSTALK</sequence>
<protein>
    <recommendedName>
        <fullName evidence="1">Small ribosomal subunit protein uS19</fullName>
    </recommendedName>
    <alternativeName>
        <fullName evidence="2">30S ribosomal protein S19</fullName>
    </alternativeName>
</protein>
<organism>
    <name type="scientific">Acetivibrio thermocellus (strain ATCC 27405 / DSM 1237 / JCM 9322 / NBRC 103400 / NCIMB 10682 / NRRL B-4536 / VPI 7372)</name>
    <name type="common">Clostridium thermocellum</name>
    <dbReference type="NCBI Taxonomy" id="203119"/>
    <lineage>
        <taxon>Bacteria</taxon>
        <taxon>Bacillati</taxon>
        <taxon>Bacillota</taxon>
        <taxon>Clostridia</taxon>
        <taxon>Eubacteriales</taxon>
        <taxon>Oscillospiraceae</taxon>
        <taxon>Acetivibrio</taxon>
    </lineage>
</organism>
<dbReference type="EMBL" id="CP000568">
    <property type="protein sequence ID" value="ABN54105.1"/>
    <property type="molecule type" value="Genomic_DNA"/>
</dbReference>
<dbReference type="RefSeq" id="WP_003514630.1">
    <property type="nucleotide sequence ID" value="NC_009012.1"/>
</dbReference>
<dbReference type="SMR" id="A3DJH6"/>
<dbReference type="STRING" id="203119.Cthe_2907"/>
<dbReference type="GeneID" id="35806204"/>
<dbReference type="KEGG" id="cth:Cthe_2907"/>
<dbReference type="eggNOG" id="COG0185">
    <property type="taxonomic scope" value="Bacteria"/>
</dbReference>
<dbReference type="HOGENOM" id="CLU_144911_0_1_9"/>
<dbReference type="OrthoDB" id="9797833at2"/>
<dbReference type="Proteomes" id="UP000002145">
    <property type="component" value="Chromosome"/>
</dbReference>
<dbReference type="GO" id="GO:0005737">
    <property type="term" value="C:cytoplasm"/>
    <property type="evidence" value="ECO:0007669"/>
    <property type="project" value="UniProtKB-ARBA"/>
</dbReference>
<dbReference type="GO" id="GO:0015935">
    <property type="term" value="C:small ribosomal subunit"/>
    <property type="evidence" value="ECO:0007669"/>
    <property type="project" value="InterPro"/>
</dbReference>
<dbReference type="GO" id="GO:0019843">
    <property type="term" value="F:rRNA binding"/>
    <property type="evidence" value="ECO:0007669"/>
    <property type="project" value="UniProtKB-UniRule"/>
</dbReference>
<dbReference type="GO" id="GO:0003735">
    <property type="term" value="F:structural constituent of ribosome"/>
    <property type="evidence" value="ECO:0007669"/>
    <property type="project" value="InterPro"/>
</dbReference>
<dbReference type="GO" id="GO:0000028">
    <property type="term" value="P:ribosomal small subunit assembly"/>
    <property type="evidence" value="ECO:0007669"/>
    <property type="project" value="TreeGrafter"/>
</dbReference>
<dbReference type="GO" id="GO:0006412">
    <property type="term" value="P:translation"/>
    <property type="evidence" value="ECO:0007669"/>
    <property type="project" value="UniProtKB-UniRule"/>
</dbReference>
<dbReference type="FunFam" id="3.30.860.10:FF:000001">
    <property type="entry name" value="30S ribosomal protein S19"/>
    <property type="match status" value="1"/>
</dbReference>
<dbReference type="Gene3D" id="3.30.860.10">
    <property type="entry name" value="30s Ribosomal Protein S19, Chain A"/>
    <property type="match status" value="1"/>
</dbReference>
<dbReference type="HAMAP" id="MF_00531">
    <property type="entry name" value="Ribosomal_uS19"/>
    <property type="match status" value="1"/>
</dbReference>
<dbReference type="InterPro" id="IPR002222">
    <property type="entry name" value="Ribosomal_uS19"/>
</dbReference>
<dbReference type="InterPro" id="IPR005732">
    <property type="entry name" value="Ribosomal_uS19_bac-type"/>
</dbReference>
<dbReference type="InterPro" id="IPR020934">
    <property type="entry name" value="Ribosomal_uS19_CS"/>
</dbReference>
<dbReference type="InterPro" id="IPR023575">
    <property type="entry name" value="Ribosomal_uS19_SF"/>
</dbReference>
<dbReference type="NCBIfam" id="TIGR01050">
    <property type="entry name" value="rpsS_bact"/>
    <property type="match status" value="1"/>
</dbReference>
<dbReference type="PANTHER" id="PTHR11880">
    <property type="entry name" value="RIBOSOMAL PROTEIN S19P FAMILY MEMBER"/>
    <property type="match status" value="1"/>
</dbReference>
<dbReference type="PANTHER" id="PTHR11880:SF8">
    <property type="entry name" value="SMALL RIBOSOMAL SUBUNIT PROTEIN US19M"/>
    <property type="match status" value="1"/>
</dbReference>
<dbReference type="Pfam" id="PF00203">
    <property type="entry name" value="Ribosomal_S19"/>
    <property type="match status" value="1"/>
</dbReference>
<dbReference type="PIRSF" id="PIRSF002144">
    <property type="entry name" value="Ribosomal_S19"/>
    <property type="match status" value="1"/>
</dbReference>
<dbReference type="PRINTS" id="PR00975">
    <property type="entry name" value="RIBOSOMALS19"/>
</dbReference>
<dbReference type="SUPFAM" id="SSF54570">
    <property type="entry name" value="Ribosomal protein S19"/>
    <property type="match status" value="1"/>
</dbReference>
<dbReference type="PROSITE" id="PS00323">
    <property type="entry name" value="RIBOSOMAL_S19"/>
    <property type="match status" value="1"/>
</dbReference>
<gene>
    <name evidence="1" type="primary">rpsS</name>
    <name type="ordered locus">Cthe_2907</name>
</gene>